<organism>
    <name type="scientific">Salmonella paratyphi A (strain AKU_12601)</name>
    <dbReference type="NCBI Taxonomy" id="554290"/>
    <lineage>
        <taxon>Bacteria</taxon>
        <taxon>Pseudomonadati</taxon>
        <taxon>Pseudomonadota</taxon>
        <taxon>Gammaproteobacteria</taxon>
        <taxon>Enterobacterales</taxon>
        <taxon>Enterobacteriaceae</taxon>
        <taxon>Salmonella</taxon>
    </lineage>
</organism>
<comment type="function">
    <text evidence="1">Thiolesterase that catalyzes the hydrolysis of S-D-lactoyl-glutathione to form glutathione and D-lactic acid.</text>
</comment>
<comment type="catalytic activity">
    <reaction evidence="1">
        <text>an S-(2-hydroxyacyl)glutathione + H2O = a 2-hydroxy carboxylate + glutathione + H(+)</text>
        <dbReference type="Rhea" id="RHEA:21864"/>
        <dbReference type="ChEBI" id="CHEBI:15377"/>
        <dbReference type="ChEBI" id="CHEBI:15378"/>
        <dbReference type="ChEBI" id="CHEBI:57925"/>
        <dbReference type="ChEBI" id="CHEBI:58896"/>
        <dbReference type="ChEBI" id="CHEBI:71261"/>
        <dbReference type="EC" id="3.1.2.6"/>
    </reaction>
</comment>
<comment type="cofactor">
    <cofactor evidence="1">
        <name>Zn(2+)</name>
        <dbReference type="ChEBI" id="CHEBI:29105"/>
    </cofactor>
    <text evidence="1">Binds 2 Zn(2+) ions per subunit.</text>
</comment>
<comment type="pathway">
    <text evidence="1">Secondary metabolite metabolism; methylglyoxal degradation; (R)-lactate from methylglyoxal: step 2/2.</text>
</comment>
<comment type="subunit">
    <text evidence="1">Monomer.</text>
</comment>
<comment type="similarity">
    <text evidence="1">Belongs to the metallo-beta-lactamase superfamily. Glyoxalase II family.</text>
</comment>
<protein>
    <recommendedName>
        <fullName evidence="1">Hydroxyacylglutathione hydrolase</fullName>
        <ecNumber evidence="1">3.1.2.6</ecNumber>
    </recommendedName>
    <alternativeName>
        <fullName evidence="1">Glyoxalase II</fullName>
        <shortName evidence="1">Glx II</shortName>
    </alternativeName>
</protein>
<keyword id="KW-0378">Hydrolase</keyword>
<keyword id="KW-0479">Metal-binding</keyword>
<keyword id="KW-0862">Zinc</keyword>
<dbReference type="EC" id="3.1.2.6" evidence="1"/>
<dbReference type="EMBL" id="FM200053">
    <property type="protein sequence ID" value="CAR60570.1"/>
    <property type="molecule type" value="Genomic_DNA"/>
</dbReference>
<dbReference type="RefSeq" id="WP_001052769.1">
    <property type="nucleotide sequence ID" value="NC_011147.1"/>
</dbReference>
<dbReference type="SMR" id="B5BDW7"/>
<dbReference type="KEGG" id="sek:SSPA2339"/>
<dbReference type="HOGENOM" id="CLU_030571_4_1_6"/>
<dbReference type="UniPathway" id="UPA00619">
    <property type="reaction ID" value="UER00676"/>
</dbReference>
<dbReference type="Proteomes" id="UP000001869">
    <property type="component" value="Chromosome"/>
</dbReference>
<dbReference type="GO" id="GO:0004416">
    <property type="term" value="F:hydroxyacylglutathione hydrolase activity"/>
    <property type="evidence" value="ECO:0007669"/>
    <property type="project" value="UniProtKB-UniRule"/>
</dbReference>
<dbReference type="GO" id="GO:0046872">
    <property type="term" value="F:metal ion binding"/>
    <property type="evidence" value="ECO:0007669"/>
    <property type="project" value="UniProtKB-KW"/>
</dbReference>
<dbReference type="GO" id="GO:0019243">
    <property type="term" value="P:methylglyoxal catabolic process to D-lactate via S-lactoyl-glutathione"/>
    <property type="evidence" value="ECO:0007669"/>
    <property type="project" value="InterPro"/>
</dbReference>
<dbReference type="CDD" id="cd07723">
    <property type="entry name" value="hydroxyacylglutathione_hydrolase_MBL-fold"/>
    <property type="match status" value="1"/>
</dbReference>
<dbReference type="Gene3D" id="3.60.15.10">
    <property type="entry name" value="Ribonuclease Z/Hydroxyacylglutathione hydrolase-like"/>
    <property type="match status" value="1"/>
</dbReference>
<dbReference type="HAMAP" id="MF_01374">
    <property type="entry name" value="Glyoxalase_2"/>
    <property type="match status" value="1"/>
</dbReference>
<dbReference type="InterPro" id="IPR035680">
    <property type="entry name" value="Clx_II_MBL"/>
</dbReference>
<dbReference type="InterPro" id="IPR050110">
    <property type="entry name" value="Glyoxalase_II_hydrolase"/>
</dbReference>
<dbReference type="InterPro" id="IPR032282">
    <property type="entry name" value="HAGH_C"/>
</dbReference>
<dbReference type="InterPro" id="IPR017782">
    <property type="entry name" value="Hydroxyacylglutathione_Hdrlase"/>
</dbReference>
<dbReference type="InterPro" id="IPR001279">
    <property type="entry name" value="Metallo-B-lactamas"/>
</dbReference>
<dbReference type="InterPro" id="IPR036866">
    <property type="entry name" value="RibonucZ/Hydroxyglut_hydro"/>
</dbReference>
<dbReference type="NCBIfam" id="TIGR03413">
    <property type="entry name" value="GSH_gloB"/>
    <property type="match status" value="1"/>
</dbReference>
<dbReference type="NCBIfam" id="NF007597">
    <property type="entry name" value="PRK10241.1"/>
    <property type="match status" value="1"/>
</dbReference>
<dbReference type="PANTHER" id="PTHR43705">
    <property type="entry name" value="HYDROXYACYLGLUTATHIONE HYDROLASE"/>
    <property type="match status" value="1"/>
</dbReference>
<dbReference type="PANTHER" id="PTHR43705:SF1">
    <property type="entry name" value="HYDROXYACYLGLUTATHIONE HYDROLASE GLOB"/>
    <property type="match status" value="1"/>
</dbReference>
<dbReference type="Pfam" id="PF16123">
    <property type="entry name" value="HAGH_C"/>
    <property type="match status" value="1"/>
</dbReference>
<dbReference type="Pfam" id="PF00753">
    <property type="entry name" value="Lactamase_B"/>
    <property type="match status" value="1"/>
</dbReference>
<dbReference type="PIRSF" id="PIRSF005457">
    <property type="entry name" value="Glx"/>
    <property type="match status" value="1"/>
</dbReference>
<dbReference type="SMART" id="SM00849">
    <property type="entry name" value="Lactamase_B"/>
    <property type="match status" value="1"/>
</dbReference>
<dbReference type="SUPFAM" id="SSF56281">
    <property type="entry name" value="Metallo-hydrolase/oxidoreductase"/>
    <property type="match status" value="1"/>
</dbReference>
<accession>B5BDW7</accession>
<feature type="chain" id="PRO_1000144800" description="Hydroxyacylglutathione hydrolase">
    <location>
        <begin position="1"/>
        <end position="251"/>
    </location>
</feature>
<feature type="binding site" evidence="1">
    <location>
        <position position="53"/>
    </location>
    <ligand>
        <name>Zn(2+)</name>
        <dbReference type="ChEBI" id="CHEBI:29105"/>
        <label>1</label>
    </ligand>
</feature>
<feature type="binding site" evidence="1">
    <location>
        <position position="55"/>
    </location>
    <ligand>
        <name>Zn(2+)</name>
        <dbReference type="ChEBI" id="CHEBI:29105"/>
        <label>1</label>
    </ligand>
</feature>
<feature type="binding site" evidence="1">
    <location>
        <position position="57"/>
    </location>
    <ligand>
        <name>Zn(2+)</name>
        <dbReference type="ChEBI" id="CHEBI:29105"/>
        <label>2</label>
    </ligand>
</feature>
<feature type="binding site" evidence="1">
    <location>
        <position position="58"/>
    </location>
    <ligand>
        <name>Zn(2+)</name>
        <dbReference type="ChEBI" id="CHEBI:29105"/>
        <label>2</label>
    </ligand>
</feature>
<feature type="binding site" evidence="1">
    <location>
        <position position="110"/>
    </location>
    <ligand>
        <name>Zn(2+)</name>
        <dbReference type="ChEBI" id="CHEBI:29105"/>
        <label>1</label>
    </ligand>
</feature>
<feature type="binding site" evidence="1">
    <location>
        <position position="127"/>
    </location>
    <ligand>
        <name>Zn(2+)</name>
        <dbReference type="ChEBI" id="CHEBI:29105"/>
        <label>1</label>
    </ligand>
</feature>
<feature type="binding site" evidence="1">
    <location>
        <position position="127"/>
    </location>
    <ligand>
        <name>Zn(2+)</name>
        <dbReference type="ChEBI" id="CHEBI:29105"/>
        <label>2</label>
    </ligand>
</feature>
<feature type="binding site" evidence="1">
    <location>
        <position position="165"/>
    </location>
    <ligand>
        <name>Zn(2+)</name>
        <dbReference type="ChEBI" id="CHEBI:29105"/>
        <label>2</label>
    </ligand>
</feature>
<evidence type="ECO:0000255" key="1">
    <source>
        <dbReference type="HAMAP-Rule" id="MF_01374"/>
    </source>
</evidence>
<sequence>MNLNSIPAFQDNYIWVLTNDEGRCVIVDPGEAAPVLKAIAEHKWMPEAIFLTHHHHDHVGGVKELLQHFPQMTVYGPAETQDKGATHLVDDGDTIRVLGEKFTLFATPGHTLGHVCYFSHPYLFCGDTLFSGGCGRLFEGTPSQMYQSLMKINSLPDDTLICCAHEYTLANIKFALSILPHDSFINEYYRKVKELRVKKQMTLPVILKNERKINLFLRTEDIDLINEINKETILQQPEARFAWLRSKKDTF</sequence>
<proteinExistence type="inferred from homology"/>
<reference key="1">
    <citation type="journal article" date="2009" name="BMC Genomics">
        <title>Pseudogene accumulation in the evolutionary histories of Salmonella enterica serovars Paratyphi A and Typhi.</title>
        <authorList>
            <person name="Holt K.E."/>
            <person name="Thomson N.R."/>
            <person name="Wain J."/>
            <person name="Langridge G.C."/>
            <person name="Hasan R."/>
            <person name="Bhutta Z.A."/>
            <person name="Quail M.A."/>
            <person name="Norbertczak H."/>
            <person name="Walker D."/>
            <person name="Simmonds M."/>
            <person name="White B."/>
            <person name="Bason N."/>
            <person name="Mungall K."/>
            <person name="Dougan G."/>
            <person name="Parkhill J."/>
        </authorList>
    </citation>
    <scope>NUCLEOTIDE SEQUENCE [LARGE SCALE GENOMIC DNA]</scope>
    <source>
        <strain>AKU_12601</strain>
    </source>
</reference>
<name>GLO2_SALPK</name>
<gene>
    <name evidence="1" type="primary">gloB</name>
    <name type="ordered locus">SSPA2339</name>
</gene>